<reference key="1">
    <citation type="journal article" date="1991" name="Mol. Gen. Genet.">
        <title>Nucleotide sequence of the fixABC region of Azorhizobium caulinodans ORS571: similarity of the fixB product with eukaryotic flavoproteins, characterization of fixX, and identification of nifW.</title>
        <authorList>
            <person name="Arigoni F."/>
            <person name="Kaminski P.A."/>
            <person name="Hennecke H."/>
            <person name="Elmerich C."/>
        </authorList>
    </citation>
    <scope>NUCLEOTIDE SEQUENCE [GENOMIC DNA]</scope>
</reference>
<reference key="2">
    <citation type="submission" date="2007-04" db="EMBL/GenBank/DDBJ databases">
        <title>Complete genome sequence of the nitrogen-fixing bacterium Azorhizobium caulinodans ORS571.</title>
        <authorList>
            <person name="Lee K.B."/>
            <person name="Backer P.D."/>
            <person name="Aono T."/>
            <person name="Liu C.T."/>
            <person name="Suzuki S."/>
            <person name="Suzuki T."/>
            <person name="Kaneko T."/>
            <person name="Yamada M."/>
            <person name="Tabata S."/>
            <person name="Kupfer D.M."/>
            <person name="Najar F.Z."/>
            <person name="Wiley G.B."/>
            <person name="Roe B."/>
            <person name="Binnewies T."/>
            <person name="Ussery D."/>
            <person name="Vereecke D."/>
            <person name="Gevers D."/>
            <person name="Holsters M."/>
            <person name="Oyaizu H."/>
        </authorList>
    </citation>
    <scope>NUCLEOTIDE SEQUENCE [LARGE SCALE GENOMIC DNA]</scope>
    <source>
        <strain>ATCC 43989 / DSM 5975 / JCM 20966 / LMG 6465 / NBRC 14845 / NCIMB 13405 / ORS 571</strain>
    </source>
</reference>
<reference key="3">
    <citation type="journal article" date="1988" name="Mol. Gen. Genet.">
        <title>Characterization of the fixABC region of Azorhizobium caulinodans ORS571 and identification of a new nitrogen fixation gene.</title>
        <authorList>
            <person name="Kaminski P.A."/>
            <person name="Norel F."/>
            <person name="Desnoues N."/>
            <person name="Kush A."/>
            <person name="Salzano G."/>
            <person name="Elmerich C."/>
        </authorList>
    </citation>
    <scope>NUCLEOTIDE SEQUENCE [GENOMIC DNA] OF 1-34</scope>
</reference>
<proteinExistence type="inferred from homology"/>
<gene>
    <name type="primary">fixA</name>
    <name type="ordered locus">AZC_3447</name>
</gene>
<accession>P26482</accession>
<accession>A8IIT5</accession>
<feature type="chain" id="PRO_0000167885" description="Protein FixA">
    <location>
        <begin position="1"/>
        <end position="281"/>
    </location>
</feature>
<evidence type="ECO:0000305" key="1"/>
<comment type="function">
    <text>May play a role in a redox process involved in nitrogen fixation.</text>
</comment>
<comment type="subunit">
    <text evidence="1">FixA and FixB form a heterodimer.</text>
</comment>
<comment type="similarity">
    <text evidence="1">Belongs to the ETF beta-subunit/FixA family.</text>
</comment>
<protein>
    <recommendedName>
        <fullName>Protein FixA</fullName>
    </recommendedName>
</protein>
<keyword id="KW-0249">Electron transport</keyword>
<keyword id="KW-0535">Nitrogen fixation</keyword>
<keyword id="KW-1185">Reference proteome</keyword>
<keyword id="KW-0813">Transport</keyword>
<sequence length="281" mass="30111">MHIVVCIKQVPDSAQIRVHPVTNTIMRQGVPTIINPYDLFALEAALALRDQHGGEVTVLTMGPPSAEDSLRKALTFGADRAVLLTDRFFAGSDTLATTYALATAVRKIGETFGAPDIVFTGKQTIDGDTAQVGPGIAKRLGLLQLTYVAKIANVDLAGRSIQVERRSEGGVQVLQTRLPCLITMLEATNEIRRGAMADALRAARAEVVIWSAKDAGVEDISKCGLRGSPTIVKRVFAPSARAEKATMVDFSETAPADALIAEIFKRQPKLEDDLAALARGY</sequence>
<organism>
    <name type="scientific">Azorhizobium caulinodans (strain ATCC 43989 / DSM 5975 / JCM 20966 / LMG 6465 / NBRC 14845 / NCIMB 13405 / ORS 571)</name>
    <dbReference type="NCBI Taxonomy" id="438753"/>
    <lineage>
        <taxon>Bacteria</taxon>
        <taxon>Pseudomonadati</taxon>
        <taxon>Pseudomonadota</taxon>
        <taxon>Alphaproteobacteria</taxon>
        <taxon>Hyphomicrobiales</taxon>
        <taxon>Xanthobacteraceae</taxon>
        <taxon>Azorhizobium</taxon>
    </lineage>
</organism>
<name>FIXA_AZOC5</name>
<dbReference type="EMBL" id="X55450">
    <property type="protein sequence ID" value="CAA39091.1"/>
    <property type="molecule type" value="Genomic_DNA"/>
</dbReference>
<dbReference type="EMBL" id="AP009384">
    <property type="protein sequence ID" value="BAF89445.1"/>
    <property type="molecule type" value="Genomic_DNA"/>
</dbReference>
<dbReference type="EMBL" id="M35122">
    <property type="protein sequence ID" value="AAA26189.1"/>
    <property type="molecule type" value="Genomic_DNA"/>
</dbReference>
<dbReference type="PIR" id="S14070">
    <property type="entry name" value="S14070"/>
</dbReference>
<dbReference type="RefSeq" id="WP_012171970.1">
    <property type="nucleotide sequence ID" value="NC_009937.1"/>
</dbReference>
<dbReference type="SMR" id="P26482"/>
<dbReference type="STRING" id="438753.AZC_3447"/>
<dbReference type="KEGG" id="azc:AZC_3447"/>
<dbReference type="eggNOG" id="COG2086">
    <property type="taxonomic scope" value="Bacteria"/>
</dbReference>
<dbReference type="HOGENOM" id="CLU_060196_2_1_5"/>
<dbReference type="Proteomes" id="UP000000270">
    <property type="component" value="Chromosome"/>
</dbReference>
<dbReference type="GO" id="GO:0009055">
    <property type="term" value="F:electron transfer activity"/>
    <property type="evidence" value="ECO:0007669"/>
    <property type="project" value="InterPro"/>
</dbReference>
<dbReference type="GO" id="GO:0009399">
    <property type="term" value="P:nitrogen fixation"/>
    <property type="evidence" value="ECO:0007669"/>
    <property type="project" value="UniProtKB-KW"/>
</dbReference>
<dbReference type="CDD" id="cd01714">
    <property type="entry name" value="ETF_beta"/>
    <property type="match status" value="1"/>
</dbReference>
<dbReference type="Gene3D" id="3.40.50.620">
    <property type="entry name" value="HUPs"/>
    <property type="match status" value="1"/>
</dbReference>
<dbReference type="InterPro" id="IPR000049">
    <property type="entry name" value="ET-Flavoprotein_bsu_CS"/>
</dbReference>
<dbReference type="InterPro" id="IPR014730">
    <property type="entry name" value="ETF_a/b_N"/>
</dbReference>
<dbReference type="InterPro" id="IPR012255">
    <property type="entry name" value="ETF_b"/>
</dbReference>
<dbReference type="InterPro" id="IPR033948">
    <property type="entry name" value="ETF_beta_N"/>
</dbReference>
<dbReference type="InterPro" id="IPR014729">
    <property type="entry name" value="Rossmann-like_a/b/a_fold"/>
</dbReference>
<dbReference type="PANTHER" id="PTHR21294">
    <property type="entry name" value="ELECTRON TRANSFER FLAVOPROTEIN BETA-SUBUNIT"/>
    <property type="match status" value="1"/>
</dbReference>
<dbReference type="PANTHER" id="PTHR21294:SF17">
    <property type="entry name" value="PROTEIN FIXA"/>
    <property type="match status" value="1"/>
</dbReference>
<dbReference type="Pfam" id="PF01012">
    <property type="entry name" value="ETF"/>
    <property type="match status" value="1"/>
</dbReference>
<dbReference type="PIRSF" id="PIRSF000090">
    <property type="entry name" value="Beta-ETF"/>
    <property type="match status" value="1"/>
</dbReference>
<dbReference type="SMART" id="SM00893">
    <property type="entry name" value="ETF"/>
    <property type="match status" value="1"/>
</dbReference>
<dbReference type="SUPFAM" id="SSF52402">
    <property type="entry name" value="Adenine nucleotide alpha hydrolases-like"/>
    <property type="match status" value="1"/>
</dbReference>
<dbReference type="PROSITE" id="PS01065">
    <property type="entry name" value="ETF_BETA"/>
    <property type="match status" value="1"/>
</dbReference>